<sequence>MSILSIVLTGFGLAMDAFAVSVAKGITLTRVKAKDALKVALFFGGFQALMPLIGWGAGRYFADYIKAFDHWIAFILLGFIGGKMIFEALKEEDEEKAEVAVSMEVNKNKEREFANMKRKEELSAKNLTVLAIATSIDALAVGVSFAFLGISIVQTIIIIGIITFVLCFLGVIIGEKLGDIFKNYAEIVGGVILILIGINILLEHTGIIEKLFS</sequence>
<accession>Q0SVL9</accession>
<proteinExistence type="inferred from homology"/>
<keyword id="KW-1003">Cell membrane</keyword>
<keyword id="KW-0406">Ion transport</keyword>
<keyword id="KW-0464">Manganese</keyword>
<keyword id="KW-0472">Membrane</keyword>
<keyword id="KW-0812">Transmembrane</keyword>
<keyword id="KW-1133">Transmembrane helix</keyword>
<keyword id="KW-0813">Transport</keyword>
<reference key="1">
    <citation type="journal article" date="2006" name="Genome Res.">
        <title>Skewed genomic variability in strains of the toxigenic bacterial pathogen, Clostridium perfringens.</title>
        <authorList>
            <person name="Myers G.S.A."/>
            <person name="Rasko D.A."/>
            <person name="Cheung J.K."/>
            <person name="Ravel J."/>
            <person name="Seshadri R."/>
            <person name="DeBoy R.T."/>
            <person name="Ren Q."/>
            <person name="Varga J."/>
            <person name="Awad M.M."/>
            <person name="Brinkac L.M."/>
            <person name="Daugherty S.C."/>
            <person name="Haft D.H."/>
            <person name="Dodson R.J."/>
            <person name="Madupu R."/>
            <person name="Nelson W.C."/>
            <person name="Rosovitz M.J."/>
            <person name="Sullivan S.A."/>
            <person name="Khouri H."/>
            <person name="Dimitrov G.I."/>
            <person name="Watkins K.L."/>
            <person name="Mulligan S."/>
            <person name="Benton J."/>
            <person name="Radune D."/>
            <person name="Fisher D.J."/>
            <person name="Atkins H.S."/>
            <person name="Hiscox T."/>
            <person name="Jost B.H."/>
            <person name="Billington S.J."/>
            <person name="Songer J.G."/>
            <person name="McClane B.A."/>
            <person name="Titball R.W."/>
            <person name="Rood J.I."/>
            <person name="Melville S.B."/>
            <person name="Paulsen I.T."/>
        </authorList>
    </citation>
    <scope>NUCLEOTIDE SEQUENCE [LARGE SCALE GENOMIC DNA]</scope>
    <source>
        <strain>SM101 / Type A</strain>
    </source>
</reference>
<protein>
    <recommendedName>
        <fullName evidence="1">Putative manganese efflux pump MntP</fullName>
    </recommendedName>
</protein>
<name>MNTP_CLOPS</name>
<organism>
    <name type="scientific">Clostridium perfringens (strain SM101 / Type A)</name>
    <dbReference type="NCBI Taxonomy" id="289380"/>
    <lineage>
        <taxon>Bacteria</taxon>
        <taxon>Bacillati</taxon>
        <taxon>Bacillota</taxon>
        <taxon>Clostridia</taxon>
        <taxon>Eubacteriales</taxon>
        <taxon>Clostridiaceae</taxon>
        <taxon>Clostridium</taxon>
    </lineage>
</organism>
<dbReference type="EMBL" id="CP000312">
    <property type="protein sequence ID" value="ABG87078.1"/>
    <property type="molecule type" value="Genomic_DNA"/>
</dbReference>
<dbReference type="RefSeq" id="WP_011591602.1">
    <property type="nucleotide sequence ID" value="NC_008262.1"/>
</dbReference>
<dbReference type="KEGG" id="cpr:CPR_0503"/>
<dbReference type="Proteomes" id="UP000001824">
    <property type="component" value="Chromosome"/>
</dbReference>
<dbReference type="GO" id="GO:0005886">
    <property type="term" value="C:plasma membrane"/>
    <property type="evidence" value="ECO:0007669"/>
    <property type="project" value="UniProtKB-SubCell"/>
</dbReference>
<dbReference type="GO" id="GO:0005384">
    <property type="term" value="F:manganese ion transmembrane transporter activity"/>
    <property type="evidence" value="ECO:0007669"/>
    <property type="project" value="UniProtKB-UniRule"/>
</dbReference>
<dbReference type="HAMAP" id="MF_01521">
    <property type="entry name" value="MntP_pump"/>
    <property type="match status" value="1"/>
</dbReference>
<dbReference type="InterPro" id="IPR003810">
    <property type="entry name" value="Mntp/YtaF"/>
</dbReference>
<dbReference type="InterPro" id="IPR022929">
    <property type="entry name" value="Put_MntP"/>
</dbReference>
<dbReference type="PANTHER" id="PTHR35529">
    <property type="entry name" value="MANGANESE EFFLUX PUMP MNTP-RELATED"/>
    <property type="match status" value="1"/>
</dbReference>
<dbReference type="PANTHER" id="PTHR35529:SF1">
    <property type="entry name" value="MANGANESE EFFLUX PUMP MNTP-RELATED"/>
    <property type="match status" value="1"/>
</dbReference>
<dbReference type="Pfam" id="PF02659">
    <property type="entry name" value="Mntp"/>
    <property type="match status" value="1"/>
</dbReference>
<evidence type="ECO:0000255" key="1">
    <source>
        <dbReference type="HAMAP-Rule" id="MF_01521"/>
    </source>
</evidence>
<feature type="chain" id="PRO_0000296921" description="Putative manganese efflux pump MntP">
    <location>
        <begin position="1"/>
        <end position="213"/>
    </location>
</feature>
<feature type="transmembrane region" description="Helical" evidence="1">
    <location>
        <begin position="3"/>
        <end position="23"/>
    </location>
</feature>
<feature type="transmembrane region" description="Helical" evidence="1">
    <location>
        <begin position="36"/>
        <end position="56"/>
    </location>
</feature>
<feature type="transmembrane region" description="Helical" evidence="1">
    <location>
        <begin position="67"/>
        <end position="87"/>
    </location>
</feature>
<feature type="transmembrane region" description="Helical" evidence="1">
    <location>
        <begin position="130"/>
        <end position="150"/>
    </location>
</feature>
<feature type="transmembrane region" description="Helical" evidence="1">
    <location>
        <begin position="152"/>
        <end position="172"/>
    </location>
</feature>
<feature type="transmembrane region" description="Helical" evidence="1">
    <location>
        <begin position="187"/>
        <end position="207"/>
    </location>
</feature>
<comment type="function">
    <text evidence="1">Probably functions as a manganese efflux pump.</text>
</comment>
<comment type="subcellular location">
    <subcellularLocation>
        <location evidence="1">Cell membrane</location>
        <topology evidence="1">Multi-pass membrane protein</topology>
    </subcellularLocation>
</comment>
<comment type="similarity">
    <text evidence="1">Belongs to the MntP (TC 9.B.29) family.</text>
</comment>
<gene>
    <name evidence="1" type="primary">mntP</name>
    <name type="ordered locus">CPR_0503</name>
</gene>